<keyword id="KW-0217">Developmental protein</keyword>
<keyword id="KW-0325">Glycoprotein</keyword>
<keyword id="KW-0415">Karyogamy</keyword>
<keyword id="KW-0472">Membrane</keyword>
<keyword id="KW-1185">Reference proteome</keyword>
<keyword id="KW-0812">Transmembrane</keyword>
<keyword id="KW-1133">Transmembrane helix</keyword>
<keyword id="KW-0813">Transport</keyword>
<protein>
    <recommendedName>
        <fullName evidence="5">Protein NUCLEAR FUSION DEFECTIVE 4</fullName>
    </recommendedName>
</protein>
<comment type="function">
    <text evidence="4">Required for karyogamy during female gametophyte development, when the two polar nuclei fuse to form the diploid central cell nucleus (PubMed:16698901).</text>
</comment>
<comment type="subcellular location">
    <subcellularLocation>
        <location evidence="1">Membrane</location>
        <topology evidence="1">Multi-pass membrane protein</topology>
    </subcellularLocation>
</comment>
<comment type="disruption phenotype">
    <text evidence="4">Failure of fusion of the polar nuclei during megagametogenesis.</text>
</comment>
<comment type="sequence caution" evidence="6">
    <conflict type="erroneous initiation">
        <sequence resource="EMBL-CDS" id="AAG51261"/>
    </conflict>
    <text>Truncated N-terminus.</text>
</comment>
<feature type="chain" id="PRO_0000431843" description="Protein NUCLEAR FUSION DEFECTIVE 4">
    <location>
        <begin position="1"/>
        <end position="582"/>
    </location>
</feature>
<feature type="transmembrane region" description="Helical; Name=1" evidence="1">
    <location>
        <begin position="46"/>
        <end position="66"/>
    </location>
</feature>
<feature type="transmembrane region" description="Helical; Name=2" evidence="1">
    <location>
        <begin position="100"/>
        <end position="120"/>
    </location>
</feature>
<feature type="transmembrane region" description="Helical; Name=3" evidence="1">
    <location>
        <begin position="132"/>
        <end position="152"/>
    </location>
</feature>
<feature type="transmembrane region" description="Helical; Name=4" evidence="1">
    <location>
        <begin position="172"/>
        <end position="192"/>
    </location>
</feature>
<feature type="transmembrane region" description="Helical; Name=5" evidence="1">
    <location>
        <begin position="202"/>
        <end position="222"/>
    </location>
</feature>
<feature type="transmembrane region" description="Helical; Name=6" evidence="1">
    <location>
        <begin position="243"/>
        <end position="263"/>
    </location>
</feature>
<feature type="transmembrane region" description="Helical; Name=7" evidence="1">
    <location>
        <begin position="270"/>
        <end position="290"/>
    </location>
</feature>
<feature type="transmembrane region" description="Helical; Name=8" evidence="1">
    <location>
        <begin position="358"/>
        <end position="378"/>
    </location>
</feature>
<feature type="transmembrane region" description="Helical; Name=9" evidence="1">
    <location>
        <begin position="395"/>
        <end position="412"/>
    </location>
</feature>
<feature type="transmembrane region" description="Helical; Name=10" evidence="1">
    <location>
        <begin position="425"/>
        <end position="445"/>
    </location>
</feature>
<feature type="transmembrane region" description="Helical; Name=11" evidence="1">
    <location>
        <begin position="458"/>
        <end position="478"/>
    </location>
</feature>
<feature type="transmembrane region" description="Helical; Name=12" evidence="1">
    <location>
        <begin position="489"/>
        <end position="509"/>
    </location>
</feature>
<feature type="transmembrane region" description="Helical; Name=13" evidence="1">
    <location>
        <begin position="536"/>
        <end position="556"/>
    </location>
</feature>
<feature type="region of interest" description="Disordered" evidence="3">
    <location>
        <begin position="1"/>
        <end position="20"/>
    </location>
</feature>
<feature type="glycosylation site" description="N-linked (GlcNAc...) asparagine" evidence="2">
    <location>
        <position position="391"/>
    </location>
</feature>
<dbReference type="EMBL" id="AC027135">
    <property type="protein sequence ID" value="AAG51261.1"/>
    <property type="status" value="ALT_INIT"/>
    <property type="molecule type" value="Genomic_DNA"/>
</dbReference>
<dbReference type="EMBL" id="CP002684">
    <property type="protein sequence ID" value="AEE31359.1"/>
    <property type="molecule type" value="Genomic_DNA"/>
</dbReference>
<dbReference type="PIR" id="G86440">
    <property type="entry name" value="G86440"/>
</dbReference>
<dbReference type="RefSeq" id="NP_174432.2">
    <property type="nucleotide sequence ID" value="NM_102886.2"/>
</dbReference>
<dbReference type="FunCoup" id="F4I9E1">
    <property type="interactions" value="85"/>
</dbReference>
<dbReference type="STRING" id="3702.F4I9E1"/>
<dbReference type="GlyCosmos" id="F4I9E1">
    <property type="glycosylation" value="1 site, No reported glycans"/>
</dbReference>
<dbReference type="GlyGen" id="F4I9E1">
    <property type="glycosylation" value="1 site"/>
</dbReference>
<dbReference type="iPTMnet" id="F4I9E1"/>
<dbReference type="PaxDb" id="3702-AT1G31470.1"/>
<dbReference type="ProteomicsDB" id="249380"/>
<dbReference type="EnsemblPlants" id="AT1G31470.1">
    <property type="protein sequence ID" value="AT1G31470.1"/>
    <property type="gene ID" value="AT1G31470"/>
</dbReference>
<dbReference type="GeneID" id="840037"/>
<dbReference type="Gramene" id="AT1G31470.1">
    <property type="protein sequence ID" value="AT1G31470.1"/>
    <property type="gene ID" value="AT1G31470"/>
</dbReference>
<dbReference type="KEGG" id="ath:AT1G31470"/>
<dbReference type="Araport" id="AT1G31470"/>
<dbReference type="TAIR" id="AT1G31470">
    <property type="gene designation" value="NFD4"/>
</dbReference>
<dbReference type="eggNOG" id="ENOG502QVB4">
    <property type="taxonomic scope" value="Eukaryota"/>
</dbReference>
<dbReference type="HOGENOM" id="CLU_021715_2_0_1"/>
<dbReference type="InParanoid" id="F4I9E1"/>
<dbReference type="OMA" id="ISRLEFW"/>
<dbReference type="OrthoDB" id="410267at2759"/>
<dbReference type="PRO" id="PR:F4I9E1"/>
<dbReference type="Proteomes" id="UP000006548">
    <property type="component" value="Chromosome 1"/>
</dbReference>
<dbReference type="ExpressionAtlas" id="F4I9E1">
    <property type="expression patterns" value="baseline and differential"/>
</dbReference>
<dbReference type="GO" id="GO:0016020">
    <property type="term" value="C:membrane"/>
    <property type="evidence" value="ECO:0007669"/>
    <property type="project" value="UniProtKB-SubCell"/>
</dbReference>
<dbReference type="GO" id="GO:0005739">
    <property type="term" value="C:mitochondrion"/>
    <property type="evidence" value="ECO:0000255"/>
    <property type="project" value="TAIR"/>
</dbReference>
<dbReference type="GO" id="GO:0000741">
    <property type="term" value="P:karyogamy"/>
    <property type="evidence" value="ECO:0000315"/>
    <property type="project" value="UniProtKB"/>
</dbReference>
<dbReference type="GO" id="GO:0010197">
    <property type="term" value="P:polar nucleus fusion"/>
    <property type="evidence" value="ECO:0000315"/>
    <property type="project" value="UniProtKB"/>
</dbReference>
<dbReference type="GO" id="GO:0009651">
    <property type="term" value="P:response to salt stress"/>
    <property type="evidence" value="ECO:0000315"/>
    <property type="project" value="TAIR"/>
</dbReference>
<dbReference type="CDD" id="cd17354">
    <property type="entry name" value="MFS_Mch1p_like"/>
    <property type="match status" value="1"/>
</dbReference>
<dbReference type="FunFam" id="1.20.1250.20:FF:000640">
    <property type="entry name" value="Protein NUCLEAR FUSION DEFECTIVE 4"/>
    <property type="match status" value="1"/>
</dbReference>
<dbReference type="Gene3D" id="1.20.1250.20">
    <property type="entry name" value="MFS general substrate transporter like domains"/>
    <property type="match status" value="2"/>
</dbReference>
<dbReference type="InterPro" id="IPR036259">
    <property type="entry name" value="MFS_trans_sf"/>
</dbReference>
<dbReference type="InterPro" id="IPR056555">
    <property type="entry name" value="NFD4_C"/>
</dbReference>
<dbReference type="InterPro" id="IPR010658">
    <property type="entry name" value="Nodulin-like"/>
</dbReference>
<dbReference type="PANTHER" id="PTHR21576:SF91">
    <property type="entry name" value="PROTEIN NUCLEAR FUSION DEFECTIVE 4"/>
    <property type="match status" value="1"/>
</dbReference>
<dbReference type="PANTHER" id="PTHR21576">
    <property type="entry name" value="UNCHARACTERIZED NODULIN-LIKE PROTEIN"/>
    <property type="match status" value="1"/>
</dbReference>
<dbReference type="Pfam" id="PF23262">
    <property type="entry name" value="NFD4_C"/>
    <property type="match status" value="1"/>
</dbReference>
<dbReference type="Pfam" id="PF06813">
    <property type="entry name" value="Nodulin-like"/>
    <property type="match status" value="1"/>
</dbReference>
<dbReference type="SUPFAM" id="SSF103473">
    <property type="entry name" value="MFS general substrate transporter"/>
    <property type="match status" value="2"/>
</dbReference>
<accession>F4I9E1</accession>
<accession>Q9C862</accession>
<organism evidence="9">
    <name type="scientific">Arabidopsis thaliana</name>
    <name type="common">Mouse-ear cress</name>
    <dbReference type="NCBI Taxonomy" id="3702"/>
    <lineage>
        <taxon>Eukaryota</taxon>
        <taxon>Viridiplantae</taxon>
        <taxon>Streptophyta</taxon>
        <taxon>Embryophyta</taxon>
        <taxon>Tracheophyta</taxon>
        <taxon>Spermatophyta</taxon>
        <taxon>Magnoliopsida</taxon>
        <taxon>eudicotyledons</taxon>
        <taxon>Gunneridae</taxon>
        <taxon>Pentapetalae</taxon>
        <taxon>rosids</taxon>
        <taxon>malvids</taxon>
        <taxon>Brassicales</taxon>
        <taxon>Brassicaceae</taxon>
        <taxon>Camelineae</taxon>
        <taxon>Arabidopsis</taxon>
    </lineage>
</organism>
<reference key="1">
    <citation type="journal article" date="2000" name="Nature">
        <title>Sequence and analysis of chromosome 1 of the plant Arabidopsis thaliana.</title>
        <authorList>
            <person name="Theologis A."/>
            <person name="Ecker J.R."/>
            <person name="Palm C.J."/>
            <person name="Federspiel N.A."/>
            <person name="Kaul S."/>
            <person name="White O."/>
            <person name="Alonso J."/>
            <person name="Altafi H."/>
            <person name="Araujo R."/>
            <person name="Bowman C.L."/>
            <person name="Brooks S.Y."/>
            <person name="Buehler E."/>
            <person name="Chan A."/>
            <person name="Chao Q."/>
            <person name="Chen H."/>
            <person name="Cheuk R.F."/>
            <person name="Chin C.W."/>
            <person name="Chung M.K."/>
            <person name="Conn L."/>
            <person name="Conway A.B."/>
            <person name="Conway A.R."/>
            <person name="Creasy T.H."/>
            <person name="Dewar K."/>
            <person name="Dunn P."/>
            <person name="Etgu P."/>
            <person name="Feldblyum T.V."/>
            <person name="Feng J.-D."/>
            <person name="Fong B."/>
            <person name="Fujii C.Y."/>
            <person name="Gill J.E."/>
            <person name="Goldsmith A.D."/>
            <person name="Haas B."/>
            <person name="Hansen N.F."/>
            <person name="Hughes B."/>
            <person name="Huizar L."/>
            <person name="Hunter J.L."/>
            <person name="Jenkins J."/>
            <person name="Johnson-Hopson C."/>
            <person name="Khan S."/>
            <person name="Khaykin E."/>
            <person name="Kim C.J."/>
            <person name="Koo H.L."/>
            <person name="Kremenetskaia I."/>
            <person name="Kurtz D.B."/>
            <person name="Kwan A."/>
            <person name="Lam B."/>
            <person name="Langin-Hooper S."/>
            <person name="Lee A."/>
            <person name="Lee J.M."/>
            <person name="Lenz C.A."/>
            <person name="Li J.H."/>
            <person name="Li Y.-P."/>
            <person name="Lin X."/>
            <person name="Liu S.X."/>
            <person name="Liu Z.A."/>
            <person name="Luros J.S."/>
            <person name="Maiti R."/>
            <person name="Marziali A."/>
            <person name="Militscher J."/>
            <person name="Miranda M."/>
            <person name="Nguyen M."/>
            <person name="Nierman W.C."/>
            <person name="Osborne B.I."/>
            <person name="Pai G."/>
            <person name="Peterson J."/>
            <person name="Pham P.K."/>
            <person name="Rizzo M."/>
            <person name="Rooney T."/>
            <person name="Rowley D."/>
            <person name="Sakano H."/>
            <person name="Salzberg S.L."/>
            <person name="Schwartz J.R."/>
            <person name="Shinn P."/>
            <person name="Southwick A.M."/>
            <person name="Sun H."/>
            <person name="Tallon L.J."/>
            <person name="Tambunga G."/>
            <person name="Toriumi M.J."/>
            <person name="Town C.D."/>
            <person name="Utterback T."/>
            <person name="Van Aken S."/>
            <person name="Vaysberg M."/>
            <person name="Vysotskaia V.S."/>
            <person name="Walker M."/>
            <person name="Wu D."/>
            <person name="Yu G."/>
            <person name="Fraser C.M."/>
            <person name="Venter J.C."/>
            <person name="Davis R.W."/>
        </authorList>
    </citation>
    <scope>NUCLEOTIDE SEQUENCE [LARGE SCALE GENOMIC DNA]</scope>
    <source>
        <strain>cv. Columbia</strain>
    </source>
</reference>
<reference key="2">
    <citation type="journal article" date="2017" name="Plant J.">
        <title>Araport11: a complete reannotation of the Arabidopsis thaliana reference genome.</title>
        <authorList>
            <person name="Cheng C.Y."/>
            <person name="Krishnakumar V."/>
            <person name="Chan A.P."/>
            <person name="Thibaud-Nissen F."/>
            <person name="Schobel S."/>
            <person name="Town C.D."/>
        </authorList>
    </citation>
    <scope>GENOME REANNOTATION</scope>
    <source>
        <strain>cv. Columbia</strain>
    </source>
</reference>
<reference key="3">
    <citation type="journal article" date="2006" name="Plant Physiol.">
        <title>NUCLEAR FUSION DEFECTIVE1 encodes the Arabidopsis RPL21M protein and is required for karyogamy during female gametophyte development and fertilization.</title>
        <authorList>
            <person name="Portereiko M.F."/>
            <person name="Sandaklie-Nikolova L."/>
            <person name="Lloyd A."/>
            <person name="Dever C.A."/>
            <person name="Otsuga D."/>
            <person name="Drews G.N."/>
        </authorList>
    </citation>
    <scope>FUNCTION</scope>
    <scope>DISRUPTION PHENOTYPE</scope>
    <source>
        <strain>cv. Columbia</strain>
    </source>
</reference>
<name>NFD4_ARATH</name>
<proteinExistence type="inferred from homology"/>
<gene>
    <name evidence="5" type="primary">NFD4</name>
    <name evidence="7" type="ordered locus">At1g31470</name>
    <name evidence="8" type="ORF">T8E3.15</name>
</gene>
<sequence>MRPRIRDVSDKLRPNRASFDDGETKFHRKHLPPLRTMFGRWRKWTVLVAAIWIQASTGTNFDFSAYSSHLKSVLGISQVRLNYLAVASDLGKAFGWSSGIALGYFPLSVVLFAAAAMGFVGYGVQWLVITNIITLPYSLVFLCCLLAGLSICWFNTACFILCIRHFPNNRALALSLTVSFNGISAALYSLAFNAINPSSSNLYLLLNSLVPLVVSFAALYPVLTKPSLDTTPDYDSRRHDSHVFTILNVLAVITSFHLLLSSSSTSSARLNFIGAVVLLVFPLCAPLLVYARDYFLPVINARLNHESSGYVMLNIDELKNQKTSVSSKTGYEHMGTAKEGNTVRLGDEHSFRLLISRLEFWLYYIAYFCGGTIGLVYSNNLGQIAQSLGQNSTTLVTIYSSFSFFGRLLSAAPDFMHKRFRLTRTGWFAIALLPTPIAFFLLAVSSSQQTALQTATALIGLSSGFIFAAAVSITSDLFGPNSVGVNHNILITNIPIGSLLYGYIAASIYEANASPDITPIVSDSIVCIGRDCYFKTFVFWGCLSILGVVSSLSLYIRTKPVYHRLEQDKVSLTSSYKDLDPL</sequence>
<evidence type="ECO:0000255" key="1"/>
<evidence type="ECO:0000255" key="2">
    <source>
        <dbReference type="PROSITE-ProRule" id="PRU00498"/>
    </source>
</evidence>
<evidence type="ECO:0000256" key="3">
    <source>
        <dbReference type="SAM" id="MobiDB-lite"/>
    </source>
</evidence>
<evidence type="ECO:0000269" key="4">
    <source>
    </source>
</evidence>
<evidence type="ECO:0000303" key="5">
    <source>
    </source>
</evidence>
<evidence type="ECO:0000305" key="6"/>
<evidence type="ECO:0000312" key="7">
    <source>
        <dbReference type="Araport" id="AT1G31470"/>
    </source>
</evidence>
<evidence type="ECO:0000312" key="8">
    <source>
        <dbReference type="EMBL" id="AAG51261.1"/>
    </source>
</evidence>
<evidence type="ECO:0000312" key="9">
    <source>
        <dbReference type="Proteomes" id="UP000006548"/>
    </source>
</evidence>